<gene>
    <name evidence="1 3" type="primary">sigI</name>
    <name evidence="5" type="ordered locus">BAS3231</name>
</gene>
<feature type="chain" id="PRO_0000436443" description="RNA polymerase sigma factor SigI">
    <location>
        <begin position="1"/>
        <end position="240"/>
    </location>
</feature>
<feature type="DNA-binding region" description="H-T-H motif" evidence="1">
    <location>
        <begin position="194"/>
        <end position="213"/>
    </location>
</feature>
<feature type="short sequence motif" description="Polymerase core binding" evidence="1">
    <location>
        <begin position="56"/>
        <end position="69"/>
    </location>
</feature>
<name>SIGI_BACAN</name>
<evidence type="ECO:0000255" key="1">
    <source>
        <dbReference type="HAMAP-Rule" id="MF_02064"/>
    </source>
</evidence>
<evidence type="ECO:0000269" key="2">
    <source>
    </source>
</evidence>
<evidence type="ECO:0000303" key="3">
    <source>
    </source>
</evidence>
<evidence type="ECO:0000305" key="4"/>
<evidence type="ECO:0000312" key="5">
    <source>
        <dbReference type="EMBL" id="AAT55539.1"/>
    </source>
</evidence>
<dbReference type="EMBL" id="AE017225">
    <property type="protein sequence ID" value="AAT55539.1"/>
    <property type="molecule type" value="Genomic_DNA"/>
</dbReference>
<dbReference type="RefSeq" id="WP_003160074.1">
    <property type="nucleotide sequence ID" value="NZ_WXXJ01000014.1"/>
</dbReference>
<dbReference type="RefSeq" id="YP_029488.1">
    <property type="nucleotide sequence ID" value="NC_005945.1"/>
</dbReference>
<dbReference type="SMR" id="P0DO98"/>
<dbReference type="STRING" id="261594.GBAA_3483"/>
<dbReference type="GeneID" id="45023230"/>
<dbReference type="KEGG" id="bat:BAS3231"/>
<dbReference type="PATRIC" id="fig|260799.14.peg.3461"/>
<dbReference type="eggNOG" id="COG1191">
    <property type="taxonomic scope" value="Bacteria"/>
</dbReference>
<dbReference type="OrthoDB" id="3190733at2"/>
<dbReference type="GO" id="GO:0005737">
    <property type="term" value="C:cytoplasm"/>
    <property type="evidence" value="ECO:0007669"/>
    <property type="project" value="UniProtKB-SubCell"/>
</dbReference>
<dbReference type="GO" id="GO:0003677">
    <property type="term" value="F:DNA binding"/>
    <property type="evidence" value="ECO:0007669"/>
    <property type="project" value="UniProtKB-UniRule"/>
</dbReference>
<dbReference type="GO" id="GO:0016987">
    <property type="term" value="F:sigma factor activity"/>
    <property type="evidence" value="ECO:0007669"/>
    <property type="project" value="UniProtKB-UniRule"/>
</dbReference>
<dbReference type="GO" id="GO:0006352">
    <property type="term" value="P:DNA-templated transcription initiation"/>
    <property type="evidence" value="ECO:0007669"/>
    <property type="project" value="UniProtKB-UniRule"/>
</dbReference>
<dbReference type="Gene3D" id="1.10.1740.10">
    <property type="match status" value="1"/>
</dbReference>
<dbReference type="HAMAP" id="MF_02064">
    <property type="entry name" value="Sigma70_SigI"/>
    <property type="match status" value="1"/>
</dbReference>
<dbReference type="InterPro" id="IPR014244">
    <property type="entry name" value="RNA_pol_sigma-I"/>
</dbReference>
<dbReference type="InterPro" id="IPR007627">
    <property type="entry name" value="RNA_pol_sigma70_r2"/>
</dbReference>
<dbReference type="InterPro" id="IPR013325">
    <property type="entry name" value="RNA_pol_sigma_r2"/>
</dbReference>
<dbReference type="NCBIfam" id="NF006171">
    <property type="entry name" value="PRK08311.1-2"/>
    <property type="match status" value="1"/>
</dbReference>
<dbReference type="NCBIfam" id="TIGR02895">
    <property type="entry name" value="spore_sigI"/>
    <property type="match status" value="1"/>
</dbReference>
<dbReference type="PANTHER" id="PTHR30385:SF6">
    <property type="entry name" value="RNA POLYMERASE SIGMA FACTOR SIGI"/>
    <property type="match status" value="1"/>
</dbReference>
<dbReference type="PANTHER" id="PTHR30385">
    <property type="entry name" value="SIGMA FACTOR F FLAGELLAR"/>
    <property type="match status" value="1"/>
</dbReference>
<dbReference type="Pfam" id="PF04542">
    <property type="entry name" value="Sigma70_r2"/>
    <property type="match status" value="1"/>
</dbReference>
<dbReference type="PIRSF" id="PIRSF038953">
    <property type="entry name" value="SigI"/>
    <property type="match status" value="1"/>
</dbReference>
<dbReference type="SUPFAM" id="SSF88946">
    <property type="entry name" value="Sigma2 domain of RNA polymerase sigma factors"/>
    <property type="match status" value="1"/>
</dbReference>
<accession>P0DO98</accession>
<protein>
    <recommendedName>
        <fullName evidence="1 4">RNA polymerase sigma factor SigI</fullName>
    </recommendedName>
</protein>
<keyword id="KW-0963">Cytoplasm</keyword>
<keyword id="KW-0238">DNA-binding</keyword>
<keyword id="KW-0731">Sigma factor</keyword>
<keyword id="KW-0346">Stress response</keyword>
<keyword id="KW-0804">Transcription</keyword>
<keyword id="KW-0805">Transcription regulation</keyword>
<organism>
    <name type="scientific">Bacillus anthracis</name>
    <dbReference type="NCBI Taxonomy" id="1392"/>
    <lineage>
        <taxon>Bacteria</taxon>
        <taxon>Bacillati</taxon>
        <taxon>Bacillota</taxon>
        <taxon>Bacilli</taxon>
        <taxon>Bacillales</taxon>
        <taxon>Bacillaceae</taxon>
        <taxon>Bacillus</taxon>
        <taxon>Bacillus cereus group</taxon>
    </lineage>
</organism>
<comment type="function">
    <text evidence="2">Sigma factors are initiation factors that promote the attachment of RNA polymerase to specific initiation sites and are then released. This sigma factor contributes to both stress response and virulence gene expression.</text>
</comment>
<comment type="activity regulation">
    <text evidence="1 2">Negatively regulated by the anti-sigma-I factor RsgI.</text>
</comment>
<comment type="subunit">
    <text evidence="1">Interacts with RsgI.</text>
</comment>
<comment type="subcellular location">
    <subcellularLocation>
        <location evidence="1">Cytoplasm</location>
    </subcellularLocation>
</comment>
<comment type="induction">
    <text evidence="2">Part of the sigI-rsgI operon, which is induced by heat shock. Expressed from both the sigma I and sigma A promoters. Transcription from the sigma A promoter is likely more significant to virulence regulation.</text>
</comment>
<comment type="disruption phenotype">
    <text evidence="2">Disruption results in increased sensitivity to heat shock. Loss of SigI results in a coordinated decrease in expression of all three toxin subunits.</text>
</comment>
<comment type="similarity">
    <text evidence="1">Belongs to the sigma-70 factor family. SigI subfamily.</text>
</comment>
<reference key="1">
    <citation type="submission" date="2004-01" db="EMBL/GenBank/DDBJ databases">
        <title>Complete genome sequence of Bacillus anthracis Sterne.</title>
        <authorList>
            <person name="Brettin T.S."/>
            <person name="Bruce D."/>
            <person name="Challacombe J.F."/>
            <person name="Gilna P."/>
            <person name="Han C."/>
            <person name="Hill K."/>
            <person name="Hitchcock P."/>
            <person name="Jackson P."/>
            <person name="Keim P."/>
            <person name="Longmire J."/>
            <person name="Lucas S."/>
            <person name="Okinaka R."/>
            <person name="Richardson P."/>
            <person name="Rubin E."/>
            <person name="Tice H."/>
        </authorList>
    </citation>
    <scope>NUCLEOTIDE SEQUENCE [LARGE SCALE GENOMIC DNA]</scope>
    <source>
        <strain>Sterne</strain>
    </source>
</reference>
<reference key="2">
    <citation type="journal article" date="2016" name="Microbiology">
        <title>Loss of sigmaI affects heat-shock response and virulence gene expression in Bacillus anthracis.</title>
        <authorList>
            <person name="Kim J.G."/>
            <person name="Wilson A.C."/>
        </authorList>
    </citation>
    <scope>FUNCTION</scope>
    <scope>ACTIVITY REGULATION</scope>
    <scope>INDUCTION</scope>
    <scope>DISRUPTION PHENOTYPE</scope>
    <source>
        <strain>Sterne</strain>
    </source>
</reference>
<sequence length="240" mass="28822">MLSLVMKILRKPKIEDIVCNIQNNEEDKEAFIVQYQPFIRKSISSVCRRYITEQDDEYSIGLFAFNEAIEQYSYKKGKSFLAFADLLIKRDVIDYIRKESKHNLVFLKEDEQEEMLEMQVSLTEYMKEIENGNRKEEILHFQSVLADFKITFSELAKESPKHRDTREHLIEIVKVIIKEEEMMEELFRKKKLPLKHIEPRVRVSRKTLERHRKYIIAMCIIFANNYTYILDYIRGGKHDE</sequence>
<proteinExistence type="evidence at transcript level"/>